<organism>
    <name type="scientific">Histophilus somni (strain 2336)</name>
    <name type="common">Haemophilus somnus</name>
    <dbReference type="NCBI Taxonomy" id="228400"/>
    <lineage>
        <taxon>Bacteria</taxon>
        <taxon>Pseudomonadati</taxon>
        <taxon>Pseudomonadota</taxon>
        <taxon>Gammaproteobacteria</taxon>
        <taxon>Pasteurellales</taxon>
        <taxon>Pasteurellaceae</taxon>
        <taxon>Histophilus</taxon>
    </lineage>
</organism>
<reference key="1">
    <citation type="submission" date="2008-02" db="EMBL/GenBank/DDBJ databases">
        <title>Complete sequence of Haemophilus somnus 2336.</title>
        <authorList>
            <consortium name="US DOE Joint Genome Institute"/>
            <person name="Siddaramappa S."/>
            <person name="Duncan A.J."/>
            <person name="Challacombe J.F."/>
            <person name="Rainey D."/>
            <person name="Gillaspy A.F."/>
            <person name="Carson M."/>
            <person name="Gipson J."/>
            <person name="Gipson M."/>
            <person name="Bruce D."/>
            <person name="Detter J.C."/>
            <person name="Han C.S."/>
            <person name="Land M."/>
            <person name="Tapia R."/>
            <person name="Thompson L.S."/>
            <person name="Orvis J."/>
            <person name="Zaitshik J."/>
            <person name="Barnes G."/>
            <person name="Brettin T.S."/>
            <person name="Dyer D.W."/>
            <person name="Inzana T.J."/>
        </authorList>
    </citation>
    <scope>NUCLEOTIDE SEQUENCE [LARGE SCALE GENOMIC DNA]</scope>
    <source>
        <strain>2336</strain>
    </source>
</reference>
<accession>B0UVM6</accession>
<feature type="chain" id="PRO_1000080155" description="Small ribosomal subunit protein bS16">
    <location>
        <begin position="1"/>
        <end position="82"/>
    </location>
</feature>
<protein>
    <recommendedName>
        <fullName evidence="1">Small ribosomal subunit protein bS16</fullName>
    </recommendedName>
    <alternativeName>
        <fullName evidence="2">30S ribosomal protein S16</fullName>
    </alternativeName>
</protein>
<proteinExistence type="inferred from homology"/>
<dbReference type="EMBL" id="CP000947">
    <property type="protein sequence ID" value="ACA31418.1"/>
    <property type="molecule type" value="Genomic_DNA"/>
</dbReference>
<dbReference type="RefSeq" id="WP_012340778.1">
    <property type="nucleotide sequence ID" value="NC_010519.1"/>
</dbReference>
<dbReference type="SMR" id="B0UVM6"/>
<dbReference type="STRING" id="228400.HSM_0165"/>
<dbReference type="GeneID" id="31486443"/>
<dbReference type="KEGG" id="hsm:HSM_0165"/>
<dbReference type="HOGENOM" id="CLU_100590_5_1_6"/>
<dbReference type="GO" id="GO:0005737">
    <property type="term" value="C:cytoplasm"/>
    <property type="evidence" value="ECO:0007669"/>
    <property type="project" value="UniProtKB-ARBA"/>
</dbReference>
<dbReference type="GO" id="GO:0015935">
    <property type="term" value="C:small ribosomal subunit"/>
    <property type="evidence" value="ECO:0007669"/>
    <property type="project" value="TreeGrafter"/>
</dbReference>
<dbReference type="GO" id="GO:0003735">
    <property type="term" value="F:structural constituent of ribosome"/>
    <property type="evidence" value="ECO:0007669"/>
    <property type="project" value="InterPro"/>
</dbReference>
<dbReference type="GO" id="GO:0006412">
    <property type="term" value="P:translation"/>
    <property type="evidence" value="ECO:0007669"/>
    <property type="project" value="UniProtKB-UniRule"/>
</dbReference>
<dbReference type="FunFam" id="3.30.1320.10:FF:000001">
    <property type="entry name" value="30S ribosomal protein S16"/>
    <property type="match status" value="1"/>
</dbReference>
<dbReference type="Gene3D" id="3.30.1320.10">
    <property type="match status" value="1"/>
</dbReference>
<dbReference type="HAMAP" id="MF_00385">
    <property type="entry name" value="Ribosomal_bS16"/>
    <property type="match status" value="1"/>
</dbReference>
<dbReference type="InterPro" id="IPR000307">
    <property type="entry name" value="Ribosomal_bS16"/>
</dbReference>
<dbReference type="InterPro" id="IPR023803">
    <property type="entry name" value="Ribosomal_bS16_dom_sf"/>
</dbReference>
<dbReference type="NCBIfam" id="TIGR00002">
    <property type="entry name" value="S16"/>
    <property type="match status" value="1"/>
</dbReference>
<dbReference type="PANTHER" id="PTHR12919">
    <property type="entry name" value="30S RIBOSOMAL PROTEIN S16"/>
    <property type="match status" value="1"/>
</dbReference>
<dbReference type="PANTHER" id="PTHR12919:SF20">
    <property type="entry name" value="SMALL RIBOSOMAL SUBUNIT PROTEIN BS16M"/>
    <property type="match status" value="1"/>
</dbReference>
<dbReference type="Pfam" id="PF00886">
    <property type="entry name" value="Ribosomal_S16"/>
    <property type="match status" value="1"/>
</dbReference>
<dbReference type="SUPFAM" id="SSF54565">
    <property type="entry name" value="Ribosomal protein S16"/>
    <property type="match status" value="1"/>
</dbReference>
<evidence type="ECO:0000255" key="1">
    <source>
        <dbReference type="HAMAP-Rule" id="MF_00385"/>
    </source>
</evidence>
<evidence type="ECO:0000305" key="2"/>
<sequence length="82" mass="9163">MVTIRLSRGGSKKRPFYQIVVADSRSPRDGRFIERVGFFNPLASGNVERVRINLDRVNHWIGHGASLSDRVASLVKEAQKAA</sequence>
<keyword id="KW-0687">Ribonucleoprotein</keyword>
<keyword id="KW-0689">Ribosomal protein</keyword>
<comment type="similarity">
    <text evidence="1">Belongs to the bacterial ribosomal protein bS16 family.</text>
</comment>
<name>RS16_HISS2</name>
<gene>
    <name evidence="1" type="primary">rpsP</name>
    <name type="ordered locus">HSM_0165</name>
</gene>